<sequence length="131" mass="15100">MSIFIFISLVLGLAHQHKRSSIIVRLYSKDGFQKCSLTIRAVSAYALACKLQLEHRPLRAQRLRQIRLAQKSRVFPFIFYQCPHKKKSARIHALTFTKEAELSKLSIETLRCIHLQLISCTRSPVVTNSSY</sequence>
<comment type="function">
    <text evidence="3">Secreted effector that completely suppresses the host cell death induced by cell death-inducing proteins.</text>
</comment>
<comment type="subcellular location">
    <subcellularLocation>
        <location evidence="3">Secreted</location>
    </subcellularLocation>
    <subcellularLocation>
        <location evidence="3">Host nucleus</location>
    </subcellularLocation>
    <text evidence="3">Accumulates at the margin of the nucleolus, but is absent within it.</text>
</comment>
<comment type="domain">
    <text evidence="6">Has the canonical translocation RxLR motif, but lacks the canonical EER motif, which characterizes most oomycete effectors identified so far.</text>
</comment>
<comment type="similarity">
    <text evidence="5">Belongs to the RxLR effector family.</text>
</comment>
<name>RLR45_PLAVT</name>
<organism>
    <name type="scientific">Plasmopara viticola</name>
    <name type="common">Downy mildew of grapevine</name>
    <name type="synonym">Botrytis viticola</name>
    <dbReference type="NCBI Taxonomy" id="143451"/>
    <lineage>
        <taxon>Eukaryota</taxon>
        <taxon>Sar</taxon>
        <taxon>Stramenopiles</taxon>
        <taxon>Oomycota</taxon>
        <taxon>Peronosporales</taxon>
        <taxon>Peronosporaceae</taxon>
        <taxon>Plasmopara</taxon>
    </lineage>
</organism>
<proteinExistence type="evidence at transcript level"/>
<reference key="1">
    <citation type="journal article" date="2018" name="Front. Plant Sci.">
        <title>In planta functional analysis and subcellular localization of the oomycete pathogen Plasmopara viticola candidate RXLR effector repertoire.</title>
        <authorList>
            <person name="Liu Y."/>
            <person name="Lan X."/>
            <person name="Song S."/>
            <person name="Yin L."/>
            <person name="Dry I.B."/>
            <person name="Qu J."/>
            <person name="Xiang J."/>
            <person name="Lu J."/>
        </authorList>
    </citation>
    <scope>NUCLEOTIDE SEQUENCE [MRNA]</scope>
    <scope>DOMAIN</scope>
    <scope>FUNCTION</scope>
    <scope>SUBCELLULAR LOCATION</scope>
</reference>
<dbReference type="GlyCosmos" id="P0CV12">
    <property type="glycosylation" value="1 site, No reported glycans"/>
</dbReference>
<dbReference type="GO" id="GO:0005576">
    <property type="term" value="C:extracellular region"/>
    <property type="evidence" value="ECO:0007669"/>
    <property type="project" value="UniProtKB-SubCell"/>
</dbReference>
<dbReference type="GO" id="GO:0042025">
    <property type="term" value="C:host cell nucleus"/>
    <property type="evidence" value="ECO:0007669"/>
    <property type="project" value="UniProtKB-SubCell"/>
</dbReference>
<keyword id="KW-0325">Glycoprotein</keyword>
<keyword id="KW-1048">Host nucleus</keyword>
<keyword id="KW-0964">Secreted</keyword>
<keyword id="KW-0732">Signal</keyword>
<keyword id="KW-0843">Virulence</keyword>
<accession>P0CV12</accession>
<evidence type="ECO:0000255" key="1"/>
<evidence type="ECO:0000255" key="2">
    <source>
        <dbReference type="PROSITE-ProRule" id="PRU00498"/>
    </source>
</evidence>
<evidence type="ECO:0000269" key="3">
    <source>
    </source>
</evidence>
<evidence type="ECO:0000303" key="4">
    <source>
    </source>
</evidence>
<evidence type="ECO:0000305" key="5"/>
<evidence type="ECO:0000305" key="6">
    <source>
    </source>
</evidence>
<gene>
    <name evidence="4" type="primary">RXLR45</name>
</gene>
<protein>
    <recommendedName>
        <fullName evidence="4">Secreted RxLR effector protein 45</fullName>
    </recommendedName>
</protein>
<feature type="signal peptide" evidence="1">
    <location>
        <begin position="1"/>
        <end position="16"/>
    </location>
</feature>
<feature type="chain" id="PRO_0000447921" description="Secreted RxLR effector protein 45">
    <location>
        <begin position="17"/>
        <end position="131"/>
    </location>
</feature>
<feature type="short sequence motif" description="RxLR" evidence="6">
    <location>
        <begin position="56"/>
        <end position="59"/>
    </location>
</feature>
<feature type="glycosylation site" description="N-linked (GlcNAc...) asparagine" evidence="2">
    <location>
        <position position="128"/>
    </location>
</feature>